<comment type="function">
    <text evidence="1">Protein S19 forms a complex with S13 that binds strongly to the 16S ribosomal RNA.</text>
</comment>
<comment type="similarity">
    <text evidence="1">Belongs to the universal ribosomal protein uS19 family.</text>
</comment>
<feature type="chain" id="PRO_1000128047" description="Small ribosomal subunit protein uS19">
    <location>
        <begin position="1"/>
        <end position="95"/>
    </location>
</feature>
<proteinExistence type="inferred from homology"/>
<organism>
    <name type="scientific">Thermosipho africanus (strain TCF52B)</name>
    <dbReference type="NCBI Taxonomy" id="484019"/>
    <lineage>
        <taxon>Bacteria</taxon>
        <taxon>Thermotogati</taxon>
        <taxon>Thermotogota</taxon>
        <taxon>Thermotogae</taxon>
        <taxon>Thermotogales</taxon>
        <taxon>Fervidobacteriaceae</taxon>
        <taxon>Thermosipho</taxon>
    </lineage>
</organism>
<evidence type="ECO:0000255" key="1">
    <source>
        <dbReference type="HAMAP-Rule" id="MF_00531"/>
    </source>
</evidence>
<evidence type="ECO:0000305" key="2"/>
<dbReference type="EMBL" id="CP001185">
    <property type="protein sequence ID" value="ACJ75664.1"/>
    <property type="molecule type" value="Genomic_DNA"/>
</dbReference>
<dbReference type="RefSeq" id="WP_004101445.1">
    <property type="nucleotide sequence ID" value="NC_011653.1"/>
</dbReference>
<dbReference type="SMR" id="B7IHV0"/>
<dbReference type="STRING" id="484019.THA_1219"/>
<dbReference type="KEGG" id="taf:THA_1219"/>
<dbReference type="eggNOG" id="COG0185">
    <property type="taxonomic scope" value="Bacteria"/>
</dbReference>
<dbReference type="HOGENOM" id="CLU_144911_0_1_0"/>
<dbReference type="OrthoDB" id="9797833at2"/>
<dbReference type="Proteomes" id="UP000002453">
    <property type="component" value="Chromosome"/>
</dbReference>
<dbReference type="GO" id="GO:0005737">
    <property type="term" value="C:cytoplasm"/>
    <property type="evidence" value="ECO:0007669"/>
    <property type="project" value="UniProtKB-ARBA"/>
</dbReference>
<dbReference type="GO" id="GO:0015935">
    <property type="term" value="C:small ribosomal subunit"/>
    <property type="evidence" value="ECO:0007669"/>
    <property type="project" value="InterPro"/>
</dbReference>
<dbReference type="GO" id="GO:0019843">
    <property type="term" value="F:rRNA binding"/>
    <property type="evidence" value="ECO:0007669"/>
    <property type="project" value="UniProtKB-UniRule"/>
</dbReference>
<dbReference type="GO" id="GO:0003735">
    <property type="term" value="F:structural constituent of ribosome"/>
    <property type="evidence" value="ECO:0007669"/>
    <property type="project" value="InterPro"/>
</dbReference>
<dbReference type="GO" id="GO:0000028">
    <property type="term" value="P:ribosomal small subunit assembly"/>
    <property type="evidence" value="ECO:0007669"/>
    <property type="project" value="TreeGrafter"/>
</dbReference>
<dbReference type="GO" id="GO:0006412">
    <property type="term" value="P:translation"/>
    <property type="evidence" value="ECO:0007669"/>
    <property type="project" value="UniProtKB-UniRule"/>
</dbReference>
<dbReference type="FunFam" id="3.30.860.10:FF:000001">
    <property type="entry name" value="30S ribosomal protein S19"/>
    <property type="match status" value="1"/>
</dbReference>
<dbReference type="Gene3D" id="3.30.860.10">
    <property type="entry name" value="30s Ribosomal Protein S19, Chain A"/>
    <property type="match status" value="1"/>
</dbReference>
<dbReference type="HAMAP" id="MF_00531">
    <property type="entry name" value="Ribosomal_uS19"/>
    <property type="match status" value="1"/>
</dbReference>
<dbReference type="InterPro" id="IPR002222">
    <property type="entry name" value="Ribosomal_uS19"/>
</dbReference>
<dbReference type="InterPro" id="IPR005732">
    <property type="entry name" value="Ribosomal_uS19_bac-type"/>
</dbReference>
<dbReference type="InterPro" id="IPR023575">
    <property type="entry name" value="Ribosomal_uS19_SF"/>
</dbReference>
<dbReference type="NCBIfam" id="TIGR01050">
    <property type="entry name" value="rpsS_bact"/>
    <property type="match status" value="1"/>
</dbReference>
<dbReference type="PANTHER" id="PTHR11880">
    <property type="entry name" value="RIBOSOMAL PROTEIN S19P FAMILY MEMBER"/>
    <property type="match status" value="1"/>
</dbReference>
<dbReference type="PANTHER" id="PTHR11880:SF8">
    <property type="entry name" value="SMALL RIBOSOMAL SUBUNIT PROTEIN US19M"/>
    <property type="match status" value="1"/>
</dbReference>
<dbReference type="Pfam" id="PF00203">
    <property type="entry name" value="Ribosomal_S19"/>
    <property type="match status" value="1"/>
</dbReference>
<dbReference type="PIRSF" id="PIRSF002144">
    <property type="entry name" value="Ribosomal_S19"/>
    <property type="match status" value="1"/>
</dbReference>
<dbReference type="PRINTS" id="PR00975">
    <property type="entry name" value="RIBOSOMALS19"/>
</dbReference>
<dbReference type="SUPFAM" id="SSF54570">
    <property type="entry name" value="Ribosomal protein S19"/>
    <property type="match status" value="1"/>
</dbReference>
<gene>
    <name evidence="1" type="primary">rpsS</name>
    <name type="ordered locus">THA_1219</name>
</gene>
<name>RS19_THEAB</name>
<accession>B7IHV0</accession>
<protein>
    <recommendedName>
        <fullName evidence="1">Small ribosomal subunit protein uS19</fullName>
    </recommendedName>
    <alternativeName>
        <fullName evidence="2">30S ribosomal protein S19</fullName>
    </alternativeName>
</protein>
<reference key="1">
    <citation type="journal article" date="2009" name="J. Bacteriol.">
        <title>The genome of Thermosipho africanus TCF52B: lateral genetic connections to the Firmicutes and Archaea.</title>
        <authorList>
            <person name="Nesboe C.L."/>
            <person name="Bapteste E."/>
            <person name="Curtis B."/>
            <person name="Dahle H."/>
            <person name="Lopez P."/>
            <person name="Macleod D."/>
            <person name="Dlutek M."/>
            <person name="Bowman S."/>
            <person name="Zhaxybayeva O."/>
            <person name="Birkeland N.-K."/>
            <person name="Doolittle W.F."/>
        </authorList>
    </citation>
    <scope>NUCLEOTIDE SEQUENCE [LARGE SCALE GENOMIC DNA]</scope>
    <source>
        <strain>TCF52B</strain>
    </source>
</reference>
<keyword id="KW-1185">Reference proteome</keyword>
<keyword id="KW-0687">Ribonucleoprotein</keyword>
<keyword id="KW-0689">Ribosomal protein</keyword>
<keyword id="KW-0694">RNA-binding</keyword>
<keyword id="KW-0699">rRNA-binding</keyword>
<sequence length="95" mass="10681">MGRSTKKGPYVDPKLLKKIRQLNEAGEKKIIKTWSRASMIVPEMVGHTIAVYNGLKHIPVYITENMVGHRLGEFSFTRRFGGHADKSASKGQVKK</sequence>